<accession>O68932</accession>
<proteinExistence type="inferred from homology"/>
<comment type="similarity">
    <text evidence="1">Belongs to the peptidase A24 family.</text>
</comment>
<protein>
    <recommendedName>
        <fullName>Leader peptidase HopD</fullName>
    </recommendedName>
</protein>
<evidence type="ECO:0000305" key="1"/>
<sequence>MDATLPFLILYACLSVLLFLWDAKHGLLPDRFTCPLLWSGLLFSQVCNPDCLADALWGAIIGYGTFAVIYWGYRILRHKEGLGYGDVKFLAALGAWHTWTFLPRLVFLAASFACGAVVVGLLMRGKESLKNPLPFGPFLAAAGFVVGWDSLLAGR</sequence>
<feature type="chain" id="PRO_0000192635" description="Leader peptidase HopD">
    <location>
        <begin position="1"/>
        <end position="155"/>
    </location>
</feature>
<dbReference type="EMBL" id="AF058450">
    <property type="protein sequence ID" value="AAC14289.1"/>
    <property type="molecule type" value="Genomic_DNA"/>
</dbReference>
<dbReference type="RefSeq" id="WP_000340167.1">
    <property type="nucleotide sequence ID" value="NZ_WVWF01000043.1"/>
</dbReference>
<dbReference type="STRING" id="585034.ECIAI1_3472"/>
<dbReference type="MEROPS" id="A24.003"/>
<dbReference type="OMA" id="GAWHGWQ"/>
<dbReference type="GO" id="GO:0005886">
    <property type="term" value="C:plasma membrane"/>
    <property type="evidence" value="ECO:0007669"/>
    <property type="project" value="TreeGrafter"/>
</dbReference>
<dbReference type="GO" id="GO:0004190">
    <property type="term" value="F:aspartic-type endopeptidase activity"/>
    <property type="evidence" value="ECO:0007669"/>
    <property type="project" value="InterPro"/>
</dbReference>
<dbReference type="GO" id="GO:0006465">
    <property type="term" value="P:signal peptide processing"/>
    <property type="evidence" value="ECO:0007669"/>
    <property type="project" value="TreeGrafter"/>
</dbReference>
<dbReference type="Gene3D" id="1.20.120.1220">
    <property type="match status" value="1"/>
</dbReference>
<dbReference type="InterPro" id="IPR014032">
    <property type="entry name" value="Peptidase_A24A_bac"/>
</dbReference>
<dbReference type="InterPro" id="IPR000045">
    <property type="entry name" value="Prepilin_IV_endopep_pep"/>
</dbReference>
<dbReference type="InterPro" id="IPR050882">
    <property type="entry name" value="Prepilin_peptidase/N-MTase"/>
</dbReference>
<dbReference type="PANTHER" id="PTHR30487:SF0">
    <property type="entry name" value="PREPILIN LEADER PEPTIDASE_N-METHYLTRANSFERASE-RELATED"/>
    <property type="match status" value="1"/>
</dbReference>
<dbReference type="PANTHER" id="PTHR30487">
    <property type="entry name" value="TYPE 4 PREPILIN-LIKE PROTEINS LEADER PEPTIDE-PROCESSING ENZYME"/>
    <property type="match status" value="1"/>
</dbReference>
<dbReference type="Pfam" id="PF01478">
    <property type="entry name" value="Peptidase_A24"/>
    <property type="match status" value="1"/>
</dbReference>
<dbReference type="PRINTS" id="PR00864">
    <property type="entry name" value="PREPILNPTASE"/>
</dbReference>
<organism>
    <name type="scientific">Escherichia coli</name>
    <dbReference type="NCBI Taxonomy" id="562"/>
    <lineage>
        <taxon>Bacteria</taxon>
        <taxon>Pseudomonadati</taxon>
        <taxon>Pseudomonadota</taxon>
        <taxon>Gammaproteobacteria</taxon>
        <taxon>Enterobacterales</taxon>
        <taxon>Enterobacteriaceae</taxon>
        <taxon>Escherichia</taxon>
    </lineage>
</organism>
<name>HOPD_ECOLX</name>
<reference key="1">
    <citation type="submission" date="1998-04" db="EMBL/GenBank/DDBJ databases">
        <authorList>
            <person name="Noorani S.M."/>
            <person name="Lindahl L."/>
            <person name="Zengel J.M."/>
        </authorList>
    </citation>
    <scope>NUCLEOTIDE SEQUENCE [GENOMIC DNA]</scope>
    <source>
        <strain>ATCC 35349 / ECOR 30</strain>
    </source>
</reference>
<gene>
    <name type="primary">hopD</name>
</gene>